<comment type="function">
    <text evidence="1">Responsible for the release of ribosomes from messenger RNA at the termination of protein biosynthesis. May increase the efficiency of translation by recycling ribosomes from one round of translation to another.</text>
</comment>
<comment type="subcellular location">
    <subcellularLocation>
        <location evidence="1">Cytoplasm</location>
    </subcellularLocation>
</comment>
<comment type="similarity">
    <text evidence="1">Belongs to the RRF family.</text>
</comment>
<dbReference type="EMBL" id="CP000487">
    <property type="protein sequence ID" value="ABK81900.1"/>
    <property type="molecule type" value="Genomic_DNA"/>
</dbReference>
<dbReference type="RefSeq" id="WP_002847832.1">
    <property type="nucleotide sequence ID" value="NC_008599.1"/>
</dbReference>
<dbReference type="SMR" id="A0RRR3"/>
<dbReference type="GeneID" id="61065590"/>
<dbReference type="KEGG" id="cff:CFF8240_1781"/>
<dbReference type="eggNOG" id="COG0233">
    <property type="taxonomic scope" value="Bacteria"/>
</dbReference>
<dbReference type="HOGENOM" id="CLU_073981_2_0_7"/>
<dbReference type="Proteomes" id="UP000000760">
    <property type="component" value="Chromosome"/>
</dbReference>
<dbReference type="GO" id="GO:0005829">
    <property type="term" value="C:cytosol"/>
    <property type="evidence" value="ECO:0007669"/>
    <property type="project" value="GOC"/>
</dbReference>
<dbReference type="GO" id="GO:0043023">
    <property type="term" value="F:ribosomal large subunit binding"/>
    <property type="evidence" value="ECO:0007669"/>
    <property type="project" value="TreeGrafter"/>
</dbReference>
<dbReference type="GO" id="GO:0002184">
    <property type="term" value="P:cytoplasmic translational termination"/>
    <property type="evidence" value="ECO:0007669"/>
    <property type="project" value="TreeGrafter"/>
</dbReference>
<dbReference type="CDD" id="cd00520">
    <property type="entry name" value="RRF"/>
    <property type="match status" value="1"/>
</dbReference>
<dbReference type="FunFam" id="1.10.132.20:FF:000001">
    <property type="entry name" value="Ribosome-recycling factor"/>
    <property type="match status" value="1"/>
</dbReference>
<dbReference type="FunFam" id="3.30.1360.40:FF:000001">
    <property type="entry name" value="Ribosome-recycling factor"/>
    <property type="match status" value="1"/>
</dbReference>
<dbReference type="Gene3D" id="3.30.1360.40">
    <property type="match status" value="1"/>
</dbReference>
<dbReference type="Gene3D" id="1.10.132.20">
    <property type="entry name" value="Ribosome-recycling factor"/>
    <property type="match status" value="1"/>
</dbReference>
<dbReference type="HAMAP" id="MF_00040">
    <property type="entry name" value="RRF"/>
    <property type="match status" value="1"/>
</dbReference>
<dbReference type="InterPro" id="IPR002661">
    <property type="entry name" value="Ribosome_recyc_fac"/>
</dbReference>
<dbReference type="InterPro" id="IPR023584">
    <property type="entry name" value="Ribosome_recyc_fac_dom"/>
</dbReference>
<dbReference type="InterPro" id="IPR036191">
    <property type="entry name" value="RRF_sf"/>
</dbReference>
<dbReference type="NCBIfam" id="TIGR00496">
    <property type="entry name" value="frr"/>
    <property type="match status" value="1"/>
</dbReference>
<dbReference type="PANTHER" id="PTHR20982:SF3">
    <property type="entry name" value="MITOCHONDRIAL RIBOSOME RECYCLING FACTOR PSEUDO 1"/>
    <property type="match status" value="1"/>
</dbReference>
<dbReference type="PANTHER" id="PTHR20982">
    <property type="entry name" value="RIBOSOME RECYCLING FACTOR"/>
    <property type="match status" value="1"/>
</dbReference>
<dbReference type="Pfam" id="PF01765">
    <property type="entry name" value="RRF"/>
    <property type="match status" value="1"/>
</dbReference>
<dbReference type="SUPFAM" id="SSF55194">
    <property type="entry name" value="Ribosome recycling factor, RRF"/>
    <property type="match status" value="1"/>
</dbReference>
<evidence type="ECO:0000255" key="1">
    <source>
        <dbReference type="HAMAP-Rule" id="MF_00040"/>
    </source>
</evidence>
<accession>A0RRR3</accession>
<sequence>MLDEIYKNQKAFSDKALEVLKRDFTTLRTGKVNINIVDHINVDYYGSPTALNQVATVLATDASTISISPWEKTMLKAISSAIQAANIGVNPNNDGDSVKLFFPPMTTEDRQKNAKEARSMGEKAKVAIRNIRKDANDDIKKIEKDKSVSEDEIKKGYDEVQKITDSYISKIDQLVKDKEAELLKV</sequence>
<name>RRF_CAMFF</name>
<gene>
    <name evidence="1" type="primary">frr</name>
    <name type="ordered locus">CFF8240_1781</name>
</gene>
<keyword id="KW-0963">Cytoplasm</keyword>
<keyword id="KW-0648">Protein biosynthesis</keyword>
<feature type="chain" id="PRO_1000003130" description="Ribosome-recycling factor">
    <location>
        <begin position="1"/>
        <end position="185"/>
    </location>
</feature>
<proteinExistence type="inferred from homology"/>
<protein>
    <recommendedName>
        <fullName evidence="1">Ribosome-recycling factor</fullName>
        <shortName evidence="1">RRF</shortName>
    </recommendedName>
    <alternativeName>
        <fullName evidence="1">Ribosome-releasing factor</fullName>
    </alternativeName>
</protein>
<reference key="1">
    <citation type="submission" date="2006-11" db="EMBL/GenBank/DDBJ databases">
        <title>Sequence of Campylobacter fetus subsp. fetus 82-40.</title>
        <authorList>
            <person name="Fouts D.E."/>
            <person name="Nelson K.E."/>
        </authorList>
    </citation>
    <scope>NUCLEOTIDE SEQUENCE [LARGE SCALE GENOMIC DNA]</scope>
    <source>
        <strain>82-40</strain>
    </source>
</reference>
<organism>
    <name type="scientific">Campylobacter fetus subsp. fetus (strain 82-40)</name>
    <dbReference type="NCBI Taxonomy" id="360106"/>
    <lineage>
        <taxon>Bacteria</taxon>
        <taxon>Pseudomonadati</taxon>
        <taxon>Campylobacterota</taxon>
        <taxon>Epsilonproteobacteria</taxon>
        <taxon>Campylobacterales</taxon>
        <taxon>Campylobacteraceae</taxon>
        <taxon>Campylobacter</taxon>
    </lineage>
</organism>